<sequence>MSLTVTTKENEALVNEIRSLVEISRQNSAKIWRDMAERLANGRRRYASINLYKIDKFAKDGDVIVVPGSVLGVGKITKKVTIGAVHFSRAATEKLVRSGCAFMSLSDVAKANPKGTNVKIMR</sequence>
<protein>
    <recommendedName>
        <fullName evidence="1">Large ribosomal subunit protein eL18</fullName>
    </recommendedName>
    <alternativeName>
        <fullName evidence="2">50S ribosomal protein L18e</fullName>
    </alternativeName>
</protein>
<gene>
    <name evidence="1" type="primary">rpl18e</name>
    <name type="ordered locus">TV1158</name>
    <name type="ORF">TVG1187063</name>
</gene>
<keyword id="KW-0687">Ribonucleoprotein</keyword>
<keyword id="KW-0689">Ribosomal protein</keyword>
<organism>
    <name type="scientific">Thermoplasma volcanium (strain ATCC 51530 / DSM 4299 / JCM 9571 / NBRC 15438 / GSS1)</name>
    <dbReference type="NCBI Taxonomy" id="273116"/>
    <lineage>
        <taxon>Archaea</taxon>
        <taxon>Methanobacteriati</taxon>
        <taxon>Thermoplasmatota</taxon>
        <taxon>Thermoplasmata</taxon>
        <taxon>Thermoplasmatales</taxon>
        <taxon>Thermoplasmataceae</taxon>
        <taxon>Thermoplasma</taxon>
    </lineage>
</organism>
<evidence type="ECO:0000255" key="1">
    <source>
        <dbReference type="HAMAP-Rule" id="MF_00329"/>
    </source>
</evidence>
<evidence type="ECO:0000305" key="2"/>
<comment type="similarity">
    <text evidence="1">Belongs to the eukaryotic ribosomal protein eL18 family.</text>
</comment>
<comment type="sequence caution" evidence="2">
    <conflict type="erroneous initiation">
        <sequence resource="EMBL-CDS" id="BAB60300"/>
    </conflict>
</comment>
<reference key="1">
    <citation type="journal article" date="2000" name="Proc. Natl. Acad. Sci. U.S.A.">
        <title>Archaeal adaptation to higher temperatures revealed by genomic sequence of Thermoplasma volcanium.</title>
        <authorList>
            <person name="Kawashima T."/>
            <person name="Amano N."/>
            <person name="Koike H."/>
            <person name="Makino S."/>
            <person name="Higuchi S."/>
            <person name="Kawashima-Ohya Y."/>
            <person name="Watanabe K."/>
            <person name="Yamazaki M."/>
            <person name="Kanehori K."/>
            <person name="Kawamoto T."/>
            <person name="Nunoshiba T."/>
            <person name="Yamamoto Y."/>
            <person name="Aramaki H."/>
            <person name="Makino K."/>
            <person name="Suzuki M."/>
        </authorList>
    </citation>
    <scope>NUCLEOTIDE SEQUENCE [LARGE SCALE GENOMIC DNA]</scope>
    <source>
        <strain>ATCC 51530 / DSM 4299 / JCM 9571 / NBRC 15438 / GSS1</strain>
    </source>
</reference>
<feature type="chain" id="PRO_0000132806" description="Large ribosomal subunit protein eL18">
    <location>
        <begin position="1"/>
        <end position="122"/>
    </location>
</feature>
<accession>Q979K3</accession>
<name>RL18E_THEVO</name>
<dbReference type="EMBL" id="BA000011">
    <property type="protein sequence ID" value="BAB60300.1"/>
    <property type="status" value="ALT_INIT"/>
    <property type="molecule type" value="Genomic_DNA"/>
</dbReference>
<dbReference type="RefSeq" id="WP_010917392.1">
    <property type="nucleotide sequence ID" value="NC_002689.2"/>
</dbReference>
<dbReference type="SMR" id="Q979K3"/>
<dbReference type="STRING" id="273116.gene:9381958"/>
<dbReference type="PaxDb" id="273116-14325396"/>
<dbReference type="GeneID" id="1441274"/>
<dbReference type="KEGG" id="tvo:TVG1187063"/>
<dbReference type="eggNOG" id="arCOG00780">
    <property type="taxonomic scope" value="Archaea"/>
</dbReference>
<dbReference type="HOGENOM" id="CLU_146465_0_0_2"/>
<dbReference type="OrthoDB" id="11309at2157"/>
<dbReference type="PhylomeDB" id="Q979K3"/>
<dbReference type="Proteomes" id="UP000001017">
    <property type="component" value="Chromosome"/>
</dbReference>
<dbReference type="GO" id="GO:1990904">
    <property type="term" value="C:ribonucleoprotein complex"/>
    <property type="evidence" value="ECO:0007669"/>
    <property type="project" value="UniProtKB-KW"/>
</dbReference>
<dbReference type="GO" id="GO:0005840">
    <property type="term" value="C:ribosome"/>
    <property type="evidence" value="ECO:0007669"/>
    <property type="project" value="UniProtKB-KW"/>
</dbReference>
<dbReference type="GO" id="GO:0003735">
    <property type="term" value="F:structural constituent of ribosome"/>
    <property type="evidence" value="ECO:0007669"/>
    <property type="project" value="InterPro"/>
</dbReference>
<dbReference type="GO" id="GO:0006412">
    <property type="term" value="P:translation"/>
    <property type="evidence" value="ECO:0007669"/>
    <property type="project" value="UniProtKB-UniRule"/>
</dbReference>
<dbReference type="Gene3D" id="3.100.10.10">
    <property type="match status" value="1"/>
</dbReference>
<dbReference type="HAMAP" id="MF_00329">
    <property type="entry name" value="Ribosomal_eL18"/>
    <property type="match status" value="1"/>
</dbReference>
<dbReference type="InterPro" id="IPR021132">
    <property type="entry name" value="Ribosomal_eL18/eL18-A/B/_CS"/>
</dbReference>
<dbReference type="InterPro" id="IPR022947">
    <property type="entry name" value="Ribosomal_eL18_arc"/>
</dbReference>
<dbReference type="InterPro" id="IPR021131">
    <property type="entry name" value="Ribosomal_uL15/eL18"/>
</dbReference>
<dbReference type="InterPro" id="IPR036227">
    <property type="entry name" value="Ribosomal_uL15/eL18_sf"/>
</dbReference>
<dbReference type="NCBIfam" id="NF003079">
    <property type="entry name" value="PRK04005.1"/>
    <property type="match status" value="1"/>
</dbReference>
<dbReference type="Pfam" id="PF17135">
    <property type="entry name" value="Ribosomal_L18"/>
    <property type="match status" value="1"/>
</dbReference>
<dbReference type="SUPFAM" id="SSF52080">
    <property type="entry name" value="Ribosomal proteins L15p and L18e"/>
    <property type="match status" value="1"/>
</dbReference>
<dbReference type="PROSITE" id="PS01106">
    <property type="entry name" value="RIBOSOMAL_L18E"/>
    <property type="match status" value="1"/>
</dbReference>
<proteinExistence type="inferred from homology"/>